<comment type="function">
    <text evidence="2">Required for normal Golgi function.</text>
</comment>
<comment type="subunit">
    <text evidence="3">Component of the conserved oligomeric Golgi complex which is composed of eight different subunits and is required for normal Golgi morphology and localization.</text>
</comment>
<comment type="subcellular location">
    <subcellularLocation>
        <location evidence="1">Cytoplasm</location>
        <location evidence="1">Cytosol</location>
    </subcellularLocation>
    <subcellularLocation>
        <location evidence="1">Golgi apparatus membrane</location>
        <topology evidence="1">Peripheral membrane protein</topology>
    </subcellularLocation>
</comment>
<comment type="similarity">
    <text evidence="4">Belongs to the COG5 family.</text>
</comment>
<name>COG5_BOVIN</name>
<accession>P83437</accession>
<gene>
    <name type="primary">COG5</name>
</gene>
<proteinExistence type="evidence at protein level"/>
<protein>
    <recommendedName>
        <fullName>Conserved oligomeric Golgi complex subunit 5</fullName>
        <shortName>COG complex subunit 5</shortName>
    </recommendedName>
    <alternativeName>
        <fullName>13S Golgi transport complex 90 kDa subunit</fullName>
        <shortName>GTC-90</shortName>
    </alternativeName>
    <alternativeName>
        <fullName>Component of oligomeric Golgi complex 5</fullName>
    </alternativeName>
</protein>
<sequence>IGALQGAVDRVLTQPTQSIVRNVAVVNSLYK</sequence>
<dbReference type="CORUM" id="P83437"/>
<dbReference type="InParanoid" id="P83437"/>
<dbReference type="OrthoDB" id="18786at2759"/>
<dbReference type="Proteomes" id="UP000009136">
    <property type="component" value="Unplaced"/>
</dbReference>
<dbReference type="GO" id="GO:0005829">
    <property type="term" value="C:cytosol"/>
    <property type="evidence" value="ECO:0007669"/>
    <property type="project" value="UniProtKB-SubCell"/>
</dbReference>
<dbReference type="GO" id="GO:0000139">
    <property type="term" value="C:Golgi membrane"/>
    <property type="evidence" value="ECO:0007669"/>
    <property type="project" value="UniProtKB-SubCell"/>
</dbReference>
<dbReference type="GO" id="GO:0015031">
    <property type="term" value="P:protein transport"/>
    <property type="evidence" value="ECO:0007669"/>
    <property type="project" value="UniProtKB-KW"/>
</dbReference>
<reference key="1">
    <citation type="journal article" date="1998" name="J. Biol. Chem.">
        <title>Purification and characterization of a novel 13 S hetero-oligomeric protein complex that stimulates in vitro Golgi transport.</title>
        <authorList>
            <person name="Walter D.M."/>
            <person name="Paul K.S."/>
            <person name="Waters M.G."/>
        </authorList>
    </citation>
    <scope>PROTEIN SEQUENCE</scope>
    <source>
        <tissue>Brain</tissue>
    </source>
</reference>
<reference key="2">
    <citation type="journal article" date="2002" name="J. Cell Biol.">
        <title>Characterization of a mammalian Golgi-localized protein complex, COG, that is required for normal Golgi morphology and function.</title>
        <authorList>
            <person name="Ungar D."/>
            <person name="Oka T."/>
            <person name="Brittle E.E."/>
            <person name="Vasile E."/>
            <person name="Lupashin V.V."/>
            <person name="Chatterton J.E."/>
            <person name="Heuser J.E."/>
            <person name="Krieger M."/>
            <person name="Waters M.G."/>
        </authorList>
    </citation>
    <scope>SUBUNIT</scope>
</reference>
<organism>
    <name type="scientific">Bos taurus</name>
    <name type="common">Bovine</name>
    <dbReference type="NCBI Taxonomy" id="9913"/>
    <lineage>
        <taxon>Eukaryota</taxon>
        <taxon>Metazoa</taxon>
        <taxon>Chordata</taxon>
        <taxon>Craniata</taxon>
        <taxon>Vertebrata</taxon>
        <taxon>Euteleostomi</taxon>
        <taxon>Mammalia</taxon>
        <taxon>Eutheria</taxon>
        <taxon>Laurasiatheria</taxon>
        <taxon>Artiodactyla</taxon>
        <taxon>Ruminantia</taxon>
        <taxon>Pecora</taxon>
        <taxon>Bovidae</taxon>
        <taxon>Bovinae</taxon>
        <taxon>Bos</taxon>
    </lineage>
</organism>
<feature type="chain" id="PRO_0000213509" description="Conserved oligomeric Golgi complex subunit 5">
    <location>
        <begin position="1" status="less than"/>
        <end position="31" status="greater than"/>
    </location>
</feature>
<feature type="non-consecutive residues" evidence="4">
    <location>
        <begin position="10"/>
        <end position="11"/>
    </location>
</feature>
<feature type="non-consecutive residues" evidence="4">
    <location>
        <begin position="21"/>
        <end position="22"/>
    </location>
</feature>
<feature type="non-terminal residue">
    <location>
        <position position="1"/>
    </location>
</feature>
<feature type="non-terminal residue">
    <location>
        <position position="31"/>
    </location>
</feature>
<evidence type="ECO:0000250" key="1">
    <source>
        <dbReference type="UniProtKB" id="Q9UP83"/>
    </source>
</evidence>
<evidence type="ECO:0000250" key="2">
    <source>
        <dbReference type="UniProtKB" id="Q9VJD3"/>
    </source>
</evidence>
<evidence type="ECO:0000269" key="3">
    <source>
    </source>
</evidence>
<evidence type="ECO:0000305" key="4"/>
<keyword id="KW-0963">Cytoplasm</keyword>
<keyword id="KW-0903">Direct protein sequencing</keyword>
<keyword id="KW-0333">Golgi apparatus</keyword>
<keyword id="KW-0472">Membrane</keyword>
<keyword id="KW-0653">Protein transport</keyword>
<keyword id="KW-1185">Reference proteome</keyword>
<keyword id="KW-0813">Transport</keyword>